<gene>
    <name type="primary">Pcsk5</name>
</gene>
<accession>P41413</accession>
<accession>D3ZVZ3</accession>
<accession>Q62914</accession>
<proteinExistence type="evidence at transcript level"/>
<protein>
    <recommendedName>
        <fullName>Proprotein convertase subtilisin/kexin type 5</fullName>
        <ecNumber>3.4.21.-</ecNumber>
    </recommendedName>
    <alternativeName>
        <fullName>Proprotein convertase 5</fullName>
        <shortName>PC5</shortName>
    </alternativeName>
    <alternativeName>
        <fullName>Proprotein convertase 6</fullName>
        <shortName>PC6</shortName>
    </alternativeName>
    <alternativeName>
        <fullName>Subtilisin/kexin-like protease PC5</fullName>
        <shortName>rPC5</shortName>
    </alternativeName>
</protein>
<sequence length="1809" mass="201308">MDWGWGSRCCRPGRRDLLCVLALLAGCLLPVCRTRVYTNHWAVKIAGGFAEADRIASKYGFINVGQIGALKDYYHFYHSRTIKRSVLSSRGTHSFISMEPKVEWIQQQVVKKRTKRDYDLSRAQSTYFNDPKWPSMWYMHCSDNTHPCQSDMNIEGAWKRGYTGKNIVVTILDDGIERTHPDLMQNYDALASCDVNGNDLDPMPRYDASNENKHGTRCAGEVAATANNSHCTVGIAFNAKIGGVRMLDGDVTDMVEAKSVSYNPQHVHIYSASWGPDDDGKTVDGPAPLTRQAFENGVRMGRRGLGSVFVWASGNGGRSKDHCSCDGYTNSIYTISISSTAESGKKPWYLEECSSTLATTYSSGESYDKKIITTDLRQRCTDNHTGTSASAPMAAGIIALALEANPFLTWRDVQHVIVRTSRAGHLNANDWKTNAAGFKVSHLYGFGLMDAEAMVMEAEKWTTVPQQHVCVESTDRQIKTIRPNSAVRSIYKASGCSDNPNHHVNYLEHVVVRITITHPRRGDLAIYLTSPSGTRSQLLANRLFDHSMEGFKNWEFMTIHCWGERAAGDWVLEVYDTPSQLRNFKTPGKLKEWSLVLYGTSVQPYSPTNEFPKVERFRYSRVEDPTDDYGAEDYAGPCDPECSEVGCDGPGPDHCTDCLHYHYKLKNNTRICVSSCPPGHFHADKKRCRKCAPNCESCFGSHADQCLSCKYGYFLNEETSSCVAQCPEGSYQDIKKNICGKCSENCKTCTGFHNCTECKGGLSLQGSRCSVTCEDGQFFSGHDCQPCHRFCATCAGAGADGCINCTEGYVMEEGRCVQSCSVSYYLDHSLEGGYKSCKRCDNSCLTCNGPGFKNCSSCPSGYLLDLGMCQMGAICKDGEYIDEQGHCQICDASCAKCWGPTQDDCISCPITRVFDDGRCVMNCPSWKFELKKQCHPCHHTCQGCQGSGPSNCTSCKAGEFQDSEYGECMPCEEGCVGCTVDDPGACTSCATGYYMFERHCYKACPEKTFGEKWECKACGTNCGSCDQHECYWCEEGFFLSSGSCVQDCDPGFYGDQELGECKPCHRACETCTGLGYNQCSSCPEGLQLWHGTCIWPTWPHVEGKVWNEAVPTEKPSLVRSLPQDRRKWKVQIKRDATRQYQPCHSSCKTCNGSLCTSCPAGTYLWLQACVPSCPQGTWLSVRSSSCEKCAEGCASCSGDDLCQRCLSQPSNTLLLHEGRCYHSCPEGFYAKDGVCEHCSSPCKTCKGNATSCHSCEGDFVLDHGVCWETCPEKHVAVEGVCKHCPERCQDCIHEKTCKECMPDFFLYNDMCHHSCPKNFYPDMRQCVPCHKNCLGCNGPKEDDCKACADTSKVLHNGLCLDECPKGTYKDEVNDECRDCPESCLICSSAWTCLTCREGFTVVQDVCTAPKECAAIEYWDVGSHRCQPCHRKCSRCSGPSENQCYTCPRETFLLNTTCVKECPEGYHTDKDSHQCVPCHSSCRTCEGPHSMQCLSCRPGWFQLGKECLLQCRDGYYGESTSGRCEKCDKSCKTCRGPQPTDCQSCDTFFFLLRSKGQCHLACPEHYYADQHAQTCERCHPTCDKCSGKEAWNCLSCVWSYHLLKGICTPECIVGEYRDGKGENFNCKKCHESCMECKGPGSKNCTGCSAGLLLQMDDSRCLRCCNASHPHRSQDCCDCQSSTDECILPASDDTVFHEHTKTALLVTSGAMLLLLLGAAVVVWRKSRSQPVAKGRYEKLAEPTVSYSSYRSSYLDEDQVIEYRDRDYDEDDEDDIVYMGQDGTVYRKFKYGLLDEAEDDELEYDDESYSYQ</sequence>
<keyword id="KW-0025">Alternative splicing</keyword>
<keyword id="KW-0165">Cleavage on pair of basic residues</keyword>
<keyword id="KW-0325">Glycoprotein</keyword>
<keyword id="KW-0378">Hydrolase</keyword>
<keyword id="KW-0472">Membrane</keyword>
<keyword id="KW-0635">Pregnancy</keyword>
<keyword id="KW-0645">Protease</keyword>
<keyword id="KW-1185">Reference proteome</keyword>
<keyword id="KW-0677">Repeat</keyword>
<keyword id="KW-0964">Secreted</keyword>
<keyword id="KW-0720">Serine protease</keyword>
<keyword id="KW-0732">Signal</keyword>
<keyword id="KW-0812">Transmembrane</keyword>
<keyword id="KW-1133">Transmembrane helix</keyword>
<keyword id="KW-0865">Zymogen</keyword>
<comment type="function">
    <text evidence="1">Serine endoprotease that processes various proproteins by cleavage at paired basic amino acids, recognizing the RXXX[KR]R consensus motif. Likely functions in the constitutive and regulated secretory pathways. Plays an essential role in pregnancy establishment by proteolytic activation of a number of important factors such as BMP2, CALD1 and alpha-integrins. May be responsible for the maturation of gastrointestinal peptides. May be involved in the cellular proliferation of adrenal cortex via the activation of growth factors.</text>
</comment>
<comment type="subcellular location">
    <molecule>Isoform PC5A</molecule>
    <subcellularLocation>
        <location evidence="1">Secreted</location>
    </subcellularLocation>
    <text evidence="1">Secreted through the regulated secretory pathway.</text>
</comment>
<comment type="subcellular location">
    <molecule>Isoform PC5B</molecule>
    <subcellularLocation>
        <location evidence="1">Endomembrane system</location>
        <topology evidence="1">Single-pass type I membrane protein</topology>
    </subcellularLocation>
    <text evidence="1">Type I membrane protein localized to a paranuclear post-Golgi network compartment in communication with early endosomes.</text>
</comment>
<comment type="alternative products">
    <event type="alternative splicing"/>
    <isoform>
        <id>P41413-1</id>
        <name>PC5B</name>
        <name>Long</name>
        <sequence type="displayed"/>
    </isoform>
    <isoform>
        <id>P41413-2</id>
        <name>PC5A</name>
        <name>Short</name>
        <sequence type="described" ref="VSP_005440 VSP_005441"/>
    </isoform>
    <text>Additional isoforms seem to exist.</text>
</comment>
<comment type="tissue specificity">
    <text evidence="5">Expressed in the intestine, brain, adrenal gland, anterior pituitary, thyroid, ovaries, testis and lung. Highest levels are found in the gut, duodenum, jejunum and ileum. Expression is higher in female than in male reproductive organs.</text>
</comment>
<comment type="developmental stage">
    <text evidence="6">First detected at 9 dpc in highly restricted regions of the neural tube, in caudal myotomes, and at the materno-embryonic junction of the uterus. At 10 dpc, restricted expression is detected in the optic and otic vesicles, the roof of midbrain, and trunk myotomes. By mid-gestation (13 dpc to 16 dpc), expression in the developing nervous system has expanded to multiple regions including hippocampus, thalamus, hypothalamus, brain stem, and spinal cord. Expression is also detected in several peripheral organ systems, including gut, lung, adrenal and kydney primordia.</text>
</comment>
<comment type="domain">
    <text>The propeptide domain acts as an intramolecular chaperone assisting the folding of the zymogen within the endoplasmic reticulum.</text>
</comment>
<comment type="domain">
    <text>AC 1 and AC 2 (clusters of acidic amino acids) contain sorting information. AC 1 directs TGN localization and interacts with the TGN sorting protein PACS-1.</text>
</comment>
<comment type="similarity">
    <text evidence="8">Belongs to the peptidase S8 family.</text>
</comment>
<dbReference type="EC" id="3.4.21.-"/>
<dbReference type="EMBL" id="L14933">
    <property type="protein sequence ID" value="AAA99906.2"/>
    <property type="molecule type" value="mRNA"/>
</dbReference>
<dbReference type="EMBL" id="U47014">
    <property type="protein sequence ID" value="AAA87888.1"/>
    <property type="molecule type" value="mRNA"/>
</dbReference>
<dbReference type="PIR" id="B48225">
    <property type="entry name" value="B48225"/>
</dbReference>
<dbReference type="RefSeq" id="NP_446275.1">
    <molecule id="P41413-2"/>
    <property type="nucleotide sequence ID" value="NM_053823.1"/>
</dbReference>
<dbReference type="SMR" id="P41413"/>
<dbReference type="FunCoup" id="P41413">
    <property type="interactions" value="552"/>
</dbReference>
<dbReference type="IntAct" id="P41413">
    <property type="interactions" value="1"/>
</dbReference>
<dbReference type="STRING" id="10116.ENSRNOP00000016164"/>
<dbReference type="MEROPS" id="S08.076"/>
<dbReference type="GlyCosmos" id="P41413">
    <property type="glycosylation" value="8 sites, No reported glycans"/>
</dbReference>
<dbReference type="GlyGen" id="P41413">
    <property type="glycosylation" value="9 sites"/>
</dbReference>
<dbReference type="PhosphoSitePlus" id="P41413"/>
<dbReference type="PaxDb" id="10116-ENSRNOP00000016164"/>
<dbReference type="Ensembl" id="ENSRNOT00000016164.8">
    <molecule id="P41413-2"/>
    <property type="protein sequence ID" value="ENSRNOP00000016164.4"/>
    <property type="gene ID" value="ENSRNOG00000012036.8"/>
</dbReference>
<dbReference type="GeneID" id="116548"/>
<dbReference type="KEGG" id="rno:116548"/>
<dbReference type="UCSC" id="RGD:620326">
    <molecule id="P41413-1"/>
    <property type="organism name" value="rat"/>
</dbReference>
<dbReference type="AGR" id="RGD:620326"/>
<dbReference type="CTD" id="5125"/>
<dbReference type="RGD" id="620326">
    <property type="gene designation" value="Pcsk5"/>
</dbReference>
<dbReference type="VEuPathDB" id="HostDB:ENSRNOG00000012036"/>
<dbReference type="eggNOG" id="KOG3525">
    <property type="taxonomic scope" value="Eukaryota"/>
</dbReference>
<dbReference type="GeneTree" id="ENSGT00940000155770"/>
<dbReference type="HOGENOM" id="CLU_002976_3_0_1"/>
<dbReference type="InParanoid" id="P41413"/>
<dbReference type="BRENDA" id="3.4.21.B26">
    <property type="organism ID" value="5301"/>
</dbReference>
<dbReference type="Reactome" id="R-RNO-167060">
    <property type="pathway name" value="NGF processing"/>
</dbReference>
<dbReference type="Reactome" id="R-RNO-8963889">
    <property type="pathway name" value="Assembly of active LPL and LIPC lipase complexes"/>
</dbReference>
<dbReference type="PRO" id="PR:P41413"/>
<dbReference type="Proteomes" id="UP000002494">
    <property type="component" value="Chromosome 1"/>
</dbReference>
<dbReference type="Bgee" id="ENSRNOG00000012036">
    <property type="expression patterns" value="Expressed in esophagus and 17 other cell types or tissues"/>
</dbReference>
<dbReference type="GO" id="GO:0005615">
    <property type="term" value="C:extracellular space"/>
    <property type="evidence" value="ECO:0000266"/>
    <property type="project" value="RGD"/>
</dbReference>
<dbReference type="GO" id="GO:0005797">
    <property type="term" value="C:Golgi medial cisterna"/>
    <property type="evidence" value="ECO:0000314"/>
    <property type="project" value="RGD"/>
</dbReference>
<dbReference type="GO" id="GO:0000139">
    <property type="term" value="C:Golgi membrane"/>
    <property type="evidence" value="ECO:0000318"/>
    <property type="project" value="GO_Central"/>
</dbReference>
<dbReference type="GO" id="GO:0043204">
    <property type="term" value="C:perikaryon"/>
    <property type="evidence" value="ECO:0000314"/>
    <property type="project" value="RGD"/>
</dbReference>
<dbReference type="GO" id="GO:1990635">
    <property type="term" value="C:proximal dendrite"/>
    <property type="evidence" value="ECO:0000314"/>
    <property type="project" value="RGD"/>
</dbReference>
<dbReference type="GO" id="GO:0005802">
    <property type="term" value="C:trans-Golgi network"/>
    <property type="evidence" value="ECO:0000314"/>
    <property type="project" value="RGD"/>
</dbReference>
<dbReference type="GO" id="GO:0004175">
    <property type="term" value="F:endopeptidase activity"/>
    <property type="evidence" value="ECO:0000266"/>
    <property type="project" value="RGD"/>
</dbReference>
<dbReference type="GO" id="GO:0008233">
    <property type="term" value="F:peptidase activity"/>
    <property type="evidence" value="ECO:0000266"/>
    <property type="project" value="RGD"/>
</dbReference>
<dbReference type="GO" id="GO:0042277">
    <property type="term" value="F:peptide binding"/>
    <property type="evidence" value="ECO:0000266"/>
    <property type="project" value="RGD"/>
</dbReference>
<dbReference type="GO" id="GO:0004252">
    <property type="term" value="F:serine-type endopeptidase activity"/>
    <property type="evidence" value="ECO:0000266"/>
    <property type="project" value="RGD"/>
</dbReference>
<dbReference type="GO" id="GO:0009952">
    <property type="term" value="P:anterior/posterior pattern specification"/>
    <property type="evidence" value="ECO:0000266"/>
    <property type="project" value="RGD"/>
</dbReference>
<dbReference type="GO" id="GO:0003279">
    <property type="term" value="P:cardiac septum development"/>
    <property type="evidence" value="ECO:0000266"/>
    <property type="project" value="RGD"/>
</dbReference>
<dbReference type="GO" id="GO:0036120">
    <property type="term" value="P:cellular response to platelet-derived growth factor stimulus"/>
    <property type="evidence" value="ECO:0000270"/>
    <property type="project" value="RGD"/>
</dbReference>
<dbReference type="GO" id="GO:0060976">
    <property type="term" value="P:coronary vasculature development"/>
    <property type="evidence" value="ECO:0000266"/>
    <property type="project" value="RGD"/>
</dbReference>
<dbReference type="GO" id="GO:0140447">
    <property type="term" value="P:cytokine precursor processing"/>
    <property type="evidence" value="ECO:0000266"/>
    <property type="project" value="RGD"/>
</dbReference>
<dbReference type="GO" id="GO:0007368">
    <property type="term" value="P:determination of left/right symmetry"/>
    <property type="evidence" value="ECO:0000266"/>
    <property type="project" value="RGD"/>
</dbReference>
<dbReference type="GO" id="GO:0007566">
    <property type="term" value="P:embryo implantation"/>
    <property type="evidence" value="ECO:0000266"/>
    <property type="project" value="RGD"/>
</dbReference>
<dbReference type="GO" id="GO:0048566">
    <property type="term" value="P:embryonic digestive tract development"/>
    <property type="evidence" value="ECO:0000266"/>
    <property type="project" value="RGD"/>
</dbReference>
<dbReference type="GO" id="GO:0048706">
    <property type="term" value="P:embryonic skeletal system development"/>
    <property type="evidence" value="ECO:0000266"/>
    <property type="project" value="RGD"/>
</dbReference>
<dbReference type="GO" id="GO:0007507">
    <property type="term" value="P:heart development"/>
    <property type="evidence" value="ECO:0000266"/>
    <property type="project" value="RGD"/>
</dbReference>
<dbReference type="GO" id="GO:0001822">
    <property type="term" value="P:kidney development"/>
    <property type="evidence" value="ECO:0000266"/>
    <property type="project" value="RGD"/>
</dbReference>
<dbReference type="GO" id="GO:0035108">
    <property type="term" value="P:limb morphogenesis"/>
    <property type="evidence" value="ECO:0000266"/>
    <property type="project" value="RGD"/>
</dbReference>
<dbReference type="GO" id="GO:0043043">
    <property type="term" value="P:peptide biosynthetic process"/>
    <property type="evidence" value="ECO:0000266"/>
    <property type="project" value="RGD"/>
</dbReference>
<dbReference type="GO" id="GO:0016486">
    <property type="term" value="P:peptide hormone processing"/>
    <property type="evidence" value="ECO:0000266"/>
    <property type="project" value="RGD"/>
</dbReference>
<dbReference type="GO" id="GO:0033625">
    <property type="term" value="P:positive regulation of integrin activation"/>
    <property type="evidence" value="ECO:0000315"/>
    <property type="project" value="RGD"/>
</dbReference>
<dbReference type="GO" id="GO:2001046">
    <property type="term" value="P:positive regulation of integrin-mediated signaling pathway"/>
    <property type="evidence" value="ECO:0000315"/>
    <property type="project" value="RGD"/>
</dbReference>
<dbReference type="GO" id="GO:1905609">
    <property type="term" value="P:positive regulation of smooth muscle cell-matrix adhesion"/>
    <property type="evidence" value="ECO:0000315"/>
    <property type="project" value="RGD"/>
</dbReference>
<dbReference type="GO" id="GO:1904754">
    <property type="term" value="P:positive regulation of vascular associated smooth muscle cell migration"/>
    <property type="evidence" value="ECO:0000315"/>
    <property type="project" value="RGD"/>
</dbReference>
<dbReference type="GO" id="GO:0016485">
    <property type="term" value="P:protein processing"/>
    <property type="evidence" value="ECO:0000266"/>
    <property type="project" value="RGD"/>
</dbReference>
<dbReference type="GO" id="GO:0002001">
    <property type="term" value="P:renin secretion into blood stream"/>
    <property type="evidence" value="ECO:0000266"/>
    <property type="project" value="RGD"/>
</dbReference>
<dbReference type="GO" id="GO:0030323">
    <property type="term" value="P:respiratory tube development"/>
    <property type="evidence" value="ECO:0000266"/>
    <property type="project" value="RGD"/>
</dbReference>
<dbReference type="GO" id="GO:0034698">
    <property type="term" value="P:response to gonadotropin"/>
    <property type="evidence" value="ECO:0000270"/>
    <property type="project" value="RGD"/>
</dbReference>
<dbReference type="GO" id="GO:0034699">
    <property type="term" value="P:response to luteinizing hormone"/>
    <property type="evidence" value="ECO:0000270"/>
    <property type="project" value="RGD"/>
</dbReference>
<dbReference type="GO" id="GO:0006465">
    <property type="term" value="P:signal peptide processing"/>
    <property type="evidence" value="ECO:0000266"/>
    <property type="project" value="RGD"/>
</dbReference>
<dbReference type="GO" id="GO:1990874">
    <property type="term" value="P:vascular associated smooth muscle cell proliferation"/>
    <property type="evidence" value="ECO:0000270"/>
    <property type="project" value="RGD"/>
</dbReference>
<dbReference type="GO" id="GO:0019058">
    <property type="term" value="P:viral life cycle"/>
    <property type="evidence" value="ECO:0000266"/>
    <property type="project" value="RGD"/>
</dbReference>
<dbReference type="CDD" id="cd00064">
    <property type="entry name" value="FU"/>
    <property type="match status" value="18"/>
</dbReference>
<dbReference type="CDD" id="cd04059">
    <property type="entry name" value="Peptidases_S8_Protein_convertases_Kexins_Furin-like"/>
    <property type="match status" value="1"/>
</dbReference>
<dbReference type="FunFam" id="2.10.220.10:FF:000011">
    <property type="entry name" value="Proprotein convertase subtilisin/kexin type 5"/>
    <property type="match status" value="1"/>
</dbReference>
<dbReference type="FunFam" id="2.10.220.10:FF:000018">
    <property type="entry name" value="Proprotein convertase subtilisin/kexin type 5"/>
    <property type="match status" value="1"/>
</dbReference>
<dbReference type="FunFam" id="2.10.220.10:FF:000037">
    <property type="entry name" value="Proprotein convertase subtilisin/kexin type 5"/>
    <property type="match status" value="1"/>
</dbReference>
<dbReference type="FunFam" id="2.10.220.10:FF:000040">
    <property type="entry name" value="Proprotein convertase subtilisin/kexin type 5"/>
    <property type="match status" value="1"/>
</dbReference>
<dbReference type="FunFam" id="2.10.220.10:FF:000042">
    <property type="entry name" value="Proprotein convertase subtilisin/kexin type 5"/>
    <property type="match status" value="1"/>
</dbReference>
<dbReference type="FunFam" id="2.10.220.10:FF:000044">
    <property type="entry name" value="Proprotein convertase subtilisin/kexin type 5"/>
    <property type="match status" value="1"/>
</dbReference>
<dbReference type="FunFam" id="2.10.220.10:FF:000049">
    <property type="entry name" value="Proprotein convertase subtilisin/kexin type 5"/>
    <property type="match status" value="1"/>
</dbReference>
<dbReference type="FunFam" id="2.60.120.260:FF:000006">
    <property type="entry name" value="Proprotein convertase subtilisin/kexin type 5"/>
    <property type="match status" value="1"/>
</dbReference>
<dbReference type="FunFam" id="3.30.70.850:FF:000001">
    <property type="entry name" value="Proprotein convertase subtilisin/kexin type 5"/>
    <property type="match status" value="1"/>
</dbReference>
<dbReference type="FunFam" id="3.40.50.200:FF:000002">
    <property type="entry name" value="Proprotein convertase subtilisin/kexin type 5"/>
    <property type="match status" value="1"/>
</dbReference>
<dbReference type="FunFam" id="2.10.220.10:FF:000022">
    <property type="entry name" value="proprotein convertase subtilisin/kexin type 5 isoform X2"/>
    <property type="match status" value="1"/>
</dbReference>
<dbReference type="Gene3D" id="2.60.120.260">
    <property type="entry name" value="Galactose-binding domain-like"/>
    <property type="match status" value="1"/>
</dbReference>
<dbReference type="Gene3D" id="2.10.220.10">
    <property type="entry name" value="Hormone Receptor, Insulin-like Growth Factor Receptor 1, Chain A, domain 2"/>
    <property type="match status" value="13"/>
</dbReference>
<dbReference type="Gene3D" id="3.30.70.850">
    <property type="entry name" value="Peptidase S8, pro-domain"/>
    <property type="match status" value="1"/>
</dbReference>
<dbReference type="Gene3D" id="3.40.50.200">
    <property type="entry name" value="Peptidase S8/S53 domain"/>
    <property type="match status" value="1"/>
</dbReference>
<dbReference type="InterPro" id="IPR000742">
    <property type="entry name" value="EGF-like_dom"/>
</dbReference>
<dbReference type="InterPro" id="IPR006212">
    <property type="entry name" value="Furin_repeat"/>
</dbReference>
<dbReference type="InterPro" id="IPR008979">
    <property type="entry name" value="Galactose-bd-like_sf"/>
</dbReference>
<dbReference type="InterPro" id="IPR032778">
    <property type="entry name" value="GF_recep_IV"/>
</dbReference>
<dbReference type="InterPro" id="IPR009030">
    <property type="entry name" value="Growth_fac_rcpt_cys_sf"/>
</dbReference>
<dbReference type="InterPro" id="IPR034182">
    <property type="entry name" value="Kexin/furin"/>
</dbReference>
<dbReference type="InterPro" id="IPR002884">
    <property type="entry name" value="P_dom"/>
</dbReference>
<dbReference type="InterPro" id="IPR000209">
    <property type="entry name" value="Peptidase_S8/S53_dom"/>
</dbReference>
<dbReference type="InterPro" id="IPR036852">
    <property type="entry name" value="Peptidase_S8/S53_dom_sf"/>
</dbReference>
<dbReference type="InterPro" id="IPR023827">
    <property type="entry name" value="Peptidase_S8_Asp-AS"/>
</dbReference>
<dbReference type="InterPro" id="IPR022398">
    <property type="entry name" value="Peptidase_S8_His-AS"/>
</dbReference>
<dbReference type="InterPro" id="IPR023828">
    <property type="entry name" value="Peptidase_S8_Ser-AS"/>
</dbReference>
<dbReference type="InterPro" id="IPR015500">
    <property type="entry name" value="Peptidase_S8_subtilisin-rel"/>
</dbReference>
<dbReference type="InterPro" id="IPR043601">
    <property type="entry name" value="Rspo_Fu-CRD_dom"/>
</dbReference>
<dbReference type="InterPro" id="IPR032815">
    <property type="entry name" value="S8_pro-domain"/>
</dbReference>
<dbReference type="InterPro" id="IPR038466">
    <property type="entry name" value="S8_pro-domain_sf"/>
</dbReference>
<dbReference type="PANTHER" id="PTHR42884:SF3">
    <property type="entry name" value="FURIN-LIKE PROTEASE 1, ISOFORMS 1_1-X_2"/>
    <property type="match status" value="1"/>
</dbReference>
<dbReference type="PANTHER" id="PTHR42884">
    <property type="entry name" value="PROPROTEIN CONVERTASE SUBTILISIN/KEXIN-RELATED"/>
    <property type="match status" value="1"/>
</dbReference>
<dbReference type="Pfam" id="PF15913">
    <property type="entry name" value="Furin-like_2"/>
    <property type="match status" value="1"/>
</dbReference>
<dbReference type="Pfam" id="PF14843">
    <property type="entry name" value="GF_recep_IV"/>
    <property type="match status" value="2"/>
</dbReference>
<dbReference type="Pfam" id="PF01483">
    <property type="entry name" value="P_proprotein"/>
    <property type="match status" value="1"/>
</dbReference>
<dbReference type="Pfam" id="PF00082">
    <property type="entry name" value="Peptidase_S8"/>
    <property type="match status" value="1"/>
</dbReference>
<dbReference type="Pfam" id="PF16470">
    <property type="entry name" value="S8_pro-domain"/>
    <property type="match status" value="1"/>
</dbReference>
<dbReference type="PRINTS" id="PR00723">
    <property type="entry name" value="SUBTILISIN"/>
</dbReference>
<dbReference type="SMART" id="SM00181">
    <property type="entry name" value="EGF"/>
    <property type="match status" value="16"/>
</dbReference>
<dbReference type="SMART" id="SM01411">
    <property type="entry name" value="Ephrin_rec_like"/>
    <property type="match status" value="7"/>
</dbReference>
<dbReference type="SMART" id="SM00261">
    <property type="entry name" value="FU"/>
    <property type="match status" value="21"/>
</dbReference>
<dbReference type="SUPFAM" id="SSF49785">
    <property type="entry name" value="Galactose-binding domain-like"/>
    <property type="match status" value="1"/>
</dbReference>
<dbReference type="SUPFAM" id="SSF57184">
    <property type="entry name" value="Growth factor receptor domain"/>
    <property type="match status" value="8"/>
</dbReference>
<dbReference type="SUPFAM" id="SSF54897">
    <property type="entry name" value="Protease propeptides/inhibitors"/>
    <property type="match status" value="1"/>
</dbReference>
<dbReference type="SUPFAM" id="SSF52743">
    <property type="entry name" value="Subtilisin-like"/>
    <property type="match status" value="1"/>
</dbReference>
<dbReference type="PROSITE" id="PS51829">
    <property type="entry name" value="P_HOMO_B"/>
    <property type="match status" value="1"/>
</dbReference>
<dbReference type="PROSITE" id="PS51892">
    <property type="entry name" value="SUBTILASE"/>
    <property type="match status" value="1"/>
</dbReference>
<dbReference type="PROSITE" id="PS00136">
    <property type="entry name" value="SUBTILASE_ASP"/>
    <property type="match status" value="1"/>
</dbReference>
<dbReference type="PROSITE" id="PS00137">
    <property type="entry name" value="SUBTILASE_HIS"/>
    <property type="match status" value="1"/>
</dbReference>
<dbReference type="PROSITE" id="PS00138">
    <property type="entry name" value="SUBTILASE_SER"/>
    <property type="match status" value="1"/>
</dbReference>
<organism>
    <name type="scientific">Rattus norvegicus</name>
    <name type="common">Rat</name>
    <dbReference type="NCBI Taxonomy" id="10116"/>
    <lineage>
        <taxon>Eukaryota</taxon>
        <taxon>Metazoa</taxon>
        <taxon>Chordata</taxon>
        <taxon>Craniata</taxon>
        <taxon>Vertebrata</taxon>
        <taxon>Euteleostomi</taxon>
        <taxon>Mammalia</taxon>
        <taxon>Eutheria</taxon>
        <taxon>Euarchontoglires</taxon>
        <taxon>Glires</taxon>
        <taxon>Rodentia</taxon>
        <taxon>Myomorpha</taxon>
        <taxon>Muroidea</taxon>
        <taxon>Muridae</taxon>
        <taxon>Murinae</taxon>
        <taxon>Rattus</taxon>
    </lineage>
</organism>
<evidence type="ECO:0000250" key="1"/>
<evidence type="ECO:0000255" key="2"/>
<evidence type="ECO:0000255" key="3">
    <source>
        <dbReference type="PROSITE-ProRule" id="PRU01173"/>
    </source>
</evidence>
<evidence type="ECO:0000255" key="4">
    <source>
        <dbReference type="PROSITE-ProRule" id="PRU01240"/>
    </source>
</evidence>
<evidence type="ECO:0000269" key="5">
    <source>
    </source>
</evidence>
<evidence type="ECO:0000269" key="6">
    <source>
    </source>
</evidence>
<evidence type="ECO:0000303" key="7">
    <source>
    </source>
</evidence>
<evidence type="ECO:0000305" key="8"/>
<feature type="signal peptide" evidence="1">
    <location>
        <begin position="1"/>
        <end position="34"/>
    </location>
</feature>
<feature type="propeptide" id="PRO_0000027106" evidence="1">
    <location>
        <begin position="35"/>
        <end position="116"/>
    </location>
</feature>
<feature type="chain" id="PRO_0000027107" description="Proprotein convertase subtilisin/kexin type 5">
    <location>
        <begin position="117"/>
        <end position="1809"/>
    </location>
</feature>
<feature type="topological domain" description="Extracellular" evidence="2">
    <location>
        <begin position="117"/>
        <end position="1700"/>
    </location>
</feature>
<feature type="transmembrane region" description="Helical" evidence="2">
    <location>
        <begin position="1701"/>
        <end position="1721"/>
    </location>
</feature>
<feature type="topological domain" description="Cytoplasmic" evidence="2">
    <location>
        <begin position="1722"/>
        <end position="1809"/>
    </location>
</feature>
<feature type="domain" description="Peptidase S8" evidence="4">
    <location>
        <begin position="136"/>
        <end position="455"/>
    </location>
</feature>
<feature type="domain" description="P/Homo B" evidence="3">
    <location>
        <begin position="463"/>
        <end position="603"/>
    </location>
</feature>
<feature type="repeat" description="FU 1">
    <location>
        <begin position="632"/>
        <end position="682"/>
    </location>
</feature>
<feature type="repeat" description="FU 2">
    <location>
        <begin position="685"/>
        <end position="732"/>
    </location>
</feature>
<feature type="repeat" description="FU 3">
    <location>
        <begin position="736"/>
        <end position="779"/>
    </location>
</feature>
<feature type="repeat" description="FU 4">
    <location>
        <begin position="781"/>
        <end position="826"/>
    </location>
</feature>
<feature type="repeat" description="FU 5">
    <location>
        <begin position="834"/>
        <end position="881"/>
    </location>
</feature>
<feature type="repeat" description="FU 6">
    <location>
        <begin position="884"/>
        <end position="929"/>
    </location>
</feature>
<feature type="repeat" description="FU 7">
    <location>
        <begin position="931"/>
        <end position="964"/>
    </location>
</feature>
<feature type="repeat" description="FU 8">
    <location>
        <begin position="965"/>
        <end position="1010"/>
    </location>
</feature>
<feature type="repeat" description="FU 9">
    <location>
        <begin position="1012"/>
        <end position="1054"/>
    </location>
</feature>
<feature type="repeat" description="FU 10">
    <location>
        <begin position="1058"/>
        <end position="1099"/>
    </location>
</feature>
<feature type="repeat" description="FU 11">
    <location>
        <begin position="1137"/>
        <end position="1179"/>
    </location>
</feature>
<feature type="repeat" description="FU 12">
    <location>
        <begin position="1183"/>
        <end position="1230"/>
    </location>
</feature>
<feature type="repeat" description="FU 13">
    <location>
        <begin position="1232"/>
        <end position="1276"/>
    </location>
</feature>
<feature type="repeat" description="FU 14">
    <location>
        <begin position="1278"/>
        <end position="1321"/>
    </location>
</feature>
<feature type="repeat" description="FU 15">
    <location>
        <begin position="1323"/>
        <end position="1369"/>
    </location>
</feature>
<feature type="repeat" description="FU 16">
    <location>
        <begin position="1373"/>
        <end position="1418"/>
    </location>
</feature>
<feature type="repeat" description="FU 17">
    <location>
        <begin position="1422"/>
        <end position="1467"/>
    </location>
</feature>
<feature type="repeat" description="FU 18">
    <location>
        <begin position="1471"/>
        <end position="1516"/>
    </location>
</feature>
<feature type="repeat" description="FU 19">
    <location>
        <begin position="1520"/>
        <end position="1567"/>
    </location>
</feature>
<feature type="repeat" description="FU 20">
    <location>
        <begin position="1571"/>
        <end position="1616"/>
    </location>
</feature>
<feature type="repeat" description="FU 21">
    <location>
        <begin position="1622"/>
        <end position="1669"/>
    </location>
</feature>
<feature type="region of interest" description="CRM (Cys-rich motif)">
    <location>
        <begin position="638"/>
        <end position="1685"/>
    </location>
</feature>
<feature type="region of interest" description="AC 1">
    <location>
        <begin position="1757"/>
        <end position="1776"/>
    </location>
</feature>
<feature type="region of interest" description="AC 2">
    <location>
        <begin position="1788"/>
        <end position="1809"/>
    </location>
</feature>
<feature type="short sequence motif" description="Cell attachment site" evidence="2">
    <location>
        <begin position="521"/>
        <end position="523"/>
    </location>
</feature>
<feature type="active site" description="Charge relay system" evidence="4">
    <location>
        <position position="173"/>
    </location>
</feature>
<feature type="active site" description="Charge relay system" evidence="4">
    <location>
        <position position="214"/>
    </location>
</feature>
<feature type="active site" description="Charge relay system" evidence="4">
    <location>
        <position position="388"/>
    </location>
</feature>
<feature type="site" description="Cleavage; by autolysis" evidence="1">
    <location>
        <begin position="116"/>
        <end position="117"/>
    </location>
</feature>
<feature type="glycosylation site" description="N-linked (GlcNAc...) asparagine" evidence="2">
    <location>
        <position position="227"/>
    </location>
</feature>
<feature type="glycosylation site" description="N-linked (GlcNAc...) asparagine" evidence="2">
    <location>
        <position position="383"/>
    </location>
</feature>
<feature type="glycosylation site" description="N-linked (GlcNAc...) asparagine" evidence="2">
    <location>
        <position position="667"/>
    </location>
</feature>
<feature type="glycosylation site" description="N-linked (GlcNAc...) asparagine" evidence="2">
    <location>
        <position position="754"/>
    </location>
</feature>
<feature type="glycosylation site" description="N-linked (GlcNAc...) asparagine" evidence="2">
    <location>
        <position position="804"/>
    </location>
</feature>
<feature type="glycosylation site" description="N-linked (GlcNAc...) asparagine" evidence="2">
    <location>
        <position position="854"/>
    </location>
</feature>
<feature type="glycosylation site" description="N-linked (GlcNAc...) asparagine" evidence="2">
    <location>
        <position position="1642"/>
    </location>
</feature>
<feature type="glycosylation site" description="N-linked (GlcNAc...) asparagine" evidence="2">
    <location>
        <position position="1664"/>
    </location>
</feature>
<feature type="splice variant" id="VSP_005440" description="In isoform PC5A." evidence="7">
    <original>GEYIDEQGHCQICDASCAKCWGPTQDDCISCPITRVFD</original>
    <variation>ATEESWAEGGFCMLVKKNNLCQRKVLQQLCCKTCTFQG</variation>
    <location>
        <begin position="878"/>
        <end position="915"/>
    </location>
</feature>
<feature type="splice variant" id="VSP_005441" description="In isoform PC5A." evidence="7">
    <location>
        <begin position="916"/>
        <end position="1809"/>
    </location>
</feature>
<reference key="1">
    <citation type="journal article" date="1993" name="Proc. Natl. Acad. Sci. U.S.A.">
        <title>cDNA structure of the mouse and rat subtilisin/kexin-like PC5: a candidate proprotein convertase expressed in endocrine and nonendocrine cells.</title>
        <authorList>
            <person name="Lusson J."/>
            <person name="Vieau D."/>
            <person name="Hamelin J."/>
            <person name="Day R."/>
            <person name="Chretien M."/>
            <person name="Seidah N.G."/>
        </authorList>
    </citation>
    <scope>NUCLEOTIDE SEQUENCE [MRNA] (ISOFORM PC5A)</scope>
    <scope>TISSUE SPECIFICITY</scope>
    <source>
        <tissue>Adrenal gland</tissue>
    </source>
</reference>
<reference key="2">
    <citation type="journal article" date="2004" name="Nature">
        <title>Genome sequence of the Brown Norway rat yields insights into mammalian evolution.</title>
        <authorList>
            <person name="Gibbs R.A."/>
            <person name="Weinstock G.M."/>
            <person name="Metzker M.L."/>
            <person name="Muzny D.M."/>
            <person name="Sodergren E.J."/>
            <person name="Scherer S."/>
            <person name="Scott G."/>
            <person name="Steffen D."/>
            <person name="Worley K.C."/>
            <person name="Burch P.E."/>
            <person name="Okwuonu G."/>
            <person name="Hines S."/>
            <person name="Lewis L."/>
            <person name="Deramo C."/>
            <person name="Delgado O."/>
            <person name="Dugan-Rocha S."/>
            <person name="Miner G."/>
            <person name="Morgan M."/>
            <person name="Hawes A."/>
            <person name="Gill R."/>
            <person name="Holt R.A."/>
            <person name="Adams M.D."/>
            <person name="Amanatides P.G."/>
            <person name="Baden-Tillson H."/>
            <person name="Barnstead M."/>
            <person name="Chin S."/>
            <person name="Evans C.A."/>
            <person name="Ferriera S."/>
            <person name="Fosler C."/>
            <person name="Glodek A."/>
            <person name="Gu Z."/>
            <person name="Jennings D."/>
            <person name="Kraft C.L."/>
            <person name="Nguyen T."/>
            <person name="Pfannkoch C.M."/>
            <person name="Sitter C."/>
            <person name="Sutton G.G."/>
            <person name="Venter J.C."/>
            <person name="Woodage T."/>
            <person name="Smith D."/>
            <person name="Lee H.-M."/>
            <person name="Gustafson E."/>
            <person name="Cahill P."/>
            <person name="Kana A."/>
            <person name="Doucette-Stamm L."/>
            <person name="Weinstock K."/>
            <person name="Fechtel K."/>
            <person name="Weiss R.B."/>
            <person name="Dunn D.M."/>
            <person name="Green E.D."/>
            <person name="Blakesley R.W."/>
            <person name="Bouffard G.G."/>
            <person name="De Jong P.J."/>
            <person name="Osoegawa K."/>
            <person name="Zhu B."/>
            <person name="Marra M."/>
            <person name="Schein J."/>
            <person name="Bosdet I."/>
            <person name="Fjell C."/>
            <person name="Jones S."/>
            <person name="Krzywinski M."/>
            <person name="Mathewson C."/>
            <person name="Siddiqui A."/>
            <person name="Wye N."/>
            <person name="McPherson J."/>
            <person name="Zhao S."/>
            <person name="Fraser C.M."/>
            <person name="Shetty J."/>
            <person name="Shatsman S."/>
            <person name="Geer K."/>
            <person name="Chen Y."/>
            <person name="Abramzon S."/>
            <person name="Nierman W.C."/>
            <person name="Havlak P.H."/>
            <person name="Chen R."/>
            <person name="Durbin K.J."/>
            <person name="Egan A."/>
            <person name="Ren Y."/>
            <person name="Song X.-Z."/>
            <person name="Li B."/>
            <person name="Liu Y."/>
            <person name="Qin X."/>
            <person name="Cawley S."/>
            <person name="Cooney A.J."/>
            <person name="D'Souza L.M."/>
            <person name="Martin K."/>
            <person name="Wu J.Q."/>
            <person name="Gonzalez-Garay M.L."/>
            <person name="Jackson A.R."/>
            <person name="Kalafus K.J."/>
            <person name="McLeod M.P."/>
            <person name="Milosavljevic A."/>
            <person name="Virk D."/>
            <person name="Volkov A."/>
            <person name="Wheeler D.A."/>
            <person name="Zhang Z."/>
            <person name="Bailey J.A."/>
            <person name="Eichler E.E."/>
            <person name="Tuzun E."/>
            <person name="Birney E."/>
            <person name="Mongin E."/>
            <person name="Ureta-Vidal A."/>
            <person name="Woodwark C."/>
            <person name="Zdobnov E."/>
            <person name="Bork P."/>
            <person name="Suyama M."/>
            <person name="Torrents D."/>
            <person name="Alexandersson M."/>
            <person name="Trask B.J."/>
            <person name="Young J.M."/>
            <person name="Huang H."/>
            <person name="Wang H."/>
            <person name="Xing H."/>
            <person name="Daniels S."/>
            <person name="Gietzen D."/>
            <person name="Schmidt J."/>
            <person name="Stevens K."/>
            <person name="Vitt U."/>
            <person name="Wingrove J."/>
            <person name="Camara F."/>
            <person name="Mar Alba M."/>
            <person name="Abril J.F."/>
            <person name="Guigo R."/>
            <person name="Smit A."/>
            <person name="Dubchak I."/>
            <person name="Rubin E.M."/>
            <person name="Couronne O."/>
            <person name="Poliakov A."/>
            <person name="Huebner N."/>
            <person name="Ganten D."/>
            <person name="Goesele C."/>
            <person name="Hummel O."/>
            <person name="Kreitler T."/>
            <person name="Lee Y.-A."/>
            <person name="Monti J."/>
            <person name="Schulz H."/>
            <person name="Zimdahl H."/>
            <person name="Himmelbauer H."/>
            <person name="Lehrach H."/>
            <person name="Jacob H.J."/>
            <person name="Bromberg S."/>
            <person name="Gullings-Handley J."/>
            <person name="Jensen-Seaman M.I."/>
            <person name="Kwitek A.E."/>
            <person name="Lazar J."/>
            <person name="Pasko D."/>
            <person name="Tonellato P.J."/>
            <person name="Twigger S."/>
            <person name="Ponting C.P."/>
            <person name="Duarte J.M."/>
            <person name="Rice S."/>
            <person name="Goodstadt L."/>
            <person name="Beatson S.A."/>
            <person name="Emes R.D."/>
            <person name="Winter E.E."/>
            <person name="Webber C."/>
            <person name="Brandt P."/>
            <person name="Nyakatura G."/>
            <person name="Adetobi M."/>
            <person name="Chiaromonte F."/>
            <person name="Elnitski L."/>
            <person name="Eswara P."/>
            <person name="Hardison R.C."/>
            <person name="Hou M."/>
            <person name="Kolbe D."/>
            <person name="Makova K."/>
            <person name="Miller W."/>
            <person name="Nekrutenko A."/>
            <person name="Riemer C."/>
            <person name="Schwartz S."/>
            <person name="Taylor J."/>
            <person name="Yang S."/>
            <person name="Zhang Y."/>
            <person name="Lindpaintner K."/>
            <person name="Andrews T.D."/>
            <person name="Caccamo M."/>
            <person name="Clamp M."/>
            <person name="Clarke L."/>
            <person name="Curwen V."/>
            <person name="Durbin R.M."/>
            <person name="Eyras E."/>
            <person name="Searle S.M."/>
            <person name="Cooper G.M."/>
            <person name="Batzoglou S."/>
            <person name="Brudno M."/>
            <person name="Sidow A."/>
            <person name="Stone E.A."/>
            <person name="Payseur B.A."/>
            <person name="Bourque G."/>
            <person name="Lopez-Otin C."/>
            <person name="Puente X.S."/>
            <person name="Chakrabarti K."/>
            <person name="Chatterji S."/>
            <person name="Dewey C."/>
            <person name="Pachter L."/>
            <person name="Bray N."/>
            <person name="Yap V.B."/>
            <person name="Caspi A."/>
            <person name="Tesler G."/>
            <person name="Pevzner P.A."/>
            <person name="Haussler D."/>
            <person name="Roskin K.M."/>
            <person name="Baertsch R."/>
            <person name="Clawson H."/>
            <person name="Furey T.S."/>
            <person name="Hinrichs A.S."/>
            <person name="Karolchik D."/>
            <person name="Kent W.J."/>
            <person name="Rosenbloom K.R."/>
            <person name="Trumbower H."/>
            <person name="Weirauch M."/>
            <person name="Cooper D.N."/>
            <person name="Stenson P.D."/>
            <person name="Ma B."/>
            <person name="Brent M."/>
            <person name="Arumugam M."/>
            <person name="Shteynberg D."/>
            <person name="Copley R.R."/>
            <person name="Taylor M.S."/>
            <person name="Riethman H."/>
            <person name="Mudunuri U."/>
            <person name="Peterson J."/>
            <person name="Guyer M."/>
            <person name="Felsenfeld A."/>
            <person name="Old S."/>
            <person name="Mockrin S."/>
            <person name="Collins F.S."/>
        </authorList>
    </citation>
    <scope>NUCLEOTIDE SEQUENCE [LARGE SCALE GENOMIC DNA]</scope>
    <source>
        <strain>Brown Norway</strain>
    </source>
</reference>
<reference key="3">
    <citation type="submission" date="1996-01" db="EMBL/GenBank/DDBJ databases">
        <authorList>
            <person name="De Bie I."/>
            <person name="Marcinkiewicz M."/>
            <person name="Nakayama K."/>
            <person name="Lazure C."/>
            <person name="Seidah N.G."/>
        </authorList>
    </citation>
    <scope>NUCLEOTIDE SEQUENCE [MRNA] OF 1608-1809 (ISOFORM PC5B)</scope>
    <source>
        <tissue>Adrenal gland</tissue>
    </source>
</reference>
<reference key="4">
    <citation type="journal article" date="2000" name="Mol. Biol. Cell">
        <title>The PC6B cytoplasmic domain contains two acidic clusters that direct sorting to distinct trans-Golgi network/endosomal compartments.</title>
        <authorList>
            <person name="Xiang Y."/>
            <person name="Molloy S.S."/>
            <person name="Thomas L."/>
            <person name="Thomas G."/>
        </authorList>
    </citation>
    <scope>SUBCELLULAR LOCATION</scope>
</reference>
<reference key="5">
    <citation type="journal article" date="1997" name="Dev. Biol.">
        <title>The developmental expression in the rat CNS and peripheral tissues of proteases PC5 and PACE4 mRNAs: comparison with other proprotein processing enzymes.</title>
        <authorList>
            <person name="Zheng M."/>
            <person name="Seidah N.G."/>
            <person name="Pintar J.E."/>
        </authorList>
    </citation>
    <scope>DEVELOPMENTAL STAGE</scope>
</reference>
<name>PCSK5_RAT</name>